<keyword id="KW-0963">Cytoplasm</keyword>
<keyword id="KW-0489">Methyltransferase</keyword>
<keyword id="KW-1185">Reference proteome</keyword>
<keyword id="KW-0698">rRNA processing</keyword>
<keyword id="KW-0949">S-adenosyl-L-methionine</keyword>
<keyword id="KW-0808">Transferase</keyword>
<feature type="chain" id="PRO_0000386995" description="Ribosomal RNA small subunit methyltransferase H">
    <location>
        <begin position="1"/>
        <end position="396"/>
    </location>
</feature>
<feature type="binding site" evidence="1">
    <location>
        <begin position="101"/>
        <end position="103"/>
    </location>
    <ligand>
        <name>S-adenosyl-L-methionine</name>
        <dbReference type="ChEBI" id="CHEBI:59789"/>
    </ligand>
</feature>
<feature type="binding site" evidence="1">
    <location>
        <position position="120"/>
    </location>
    <ligand>
        <name>S-adenosyl-L-methionine</name>
        <dbReference type="ChEBI" id="CHEBI:59789"/>
    </ligand>
</feature>
<feature type="binding site" evidence="1">
    <location>
        <position position="147"/>
    </location>
    <ligand>
        <name>S-adenosyl-L-methionine</name>
        <dbReference type="ChEBI" id="CHEBI:59789"/>
    </ligand>
</feature>
<feature type="binding site" evidence="1">
    <location>
        <position position="171"/>
    </location>
    <ligand>
        <name>S-adenosyl-L-methionine</name>
        <dbReference type="ChEBI" id="CHEBI:59789"/>
    </ligand>
</feature>
<feature type="binding site" evidence="1">
    <location>
        <position position="178"/>
    </location>
    <ligand>
        <name>S-adenosyl-L-methionine</name>
        <dbReference type="ChEBI" id="CHEBI:59789"/>
    </ligand>
</feature>
<proteinExistence type="inferred from homology"/>
<organism>
    <name type="scientific">Mycobacterium tuberculosis (strain ATCC 25177 / H37Ra)</name>
    <dbReference type="NCBI Taxonomy" id="419947"/>
    <lineage>
        <taxon>Bacteria</taxon>
        <taxon>Bacillati</taxon>
        <taxon>Actinomycetota</taxon>
        <taxon>Actinomycetes</taxon>
        <taxon>Mycobacteriales</taxon>
        <taxon>Mycobacteriaceae</taxon>
        <taxon>Mycobacterium</taxon>
        <taxon>Mycobacterium tuberculosis complex</taxon>
    </lineage>
</organism>
<protein>
    <recommendedName>
        <fullName evidence="1">Ribosomal RNA small subunit methyltransferase H</fullName>
        <ecNumber evidence="1">2.1.1.199</ecNumber>
    </recommendedName>
    <alternativeName>
        <fullName evidence="1">16S rRNA m(4)C1402 methyltransferase</fullName>
    </alternativeName>
    <alternativeName>
        <fullName evidence="1">rRNA (cytosine-N(4)-)-methyltransferase RsmH</fullName>
    </alternativeName>
</protein>
<gene>
    <name evidence="1" type="primary">rsmH</name>
    <name type="synonym">mraW</name>
    <name type="ordered locus">MRA_2180</name>
</gene>
<evidence type="ECO:0000255" key="1">
    <source>
        <dbReference type="HAMAP-Rule" id="MF_01007"/>
    </source>
</evidence>
<dbReference type="EC" id="2.1.1.199" evidence="1"/>
<dbReference type="EMBL" id="CP000611">
    <property type="protein sequence ID" value="ABQ73942.1"/>
    <property type="molecule type" value="Genomic_DNA"/>
</dbReference>
<dbReference type="RefSeq" id="WP_003411221.1">
    <property type="nucleotide sequence ID" value="NZ_CP016972.1"/>
</dbReference>
<dbReference type="SMR" id="A5U4J2"/>
<dbReference type="KEGG" id="mra:MRA_2180"/>
<dbReference type="eggNOG" id="COG0275">
    <property type="taxonomic scope" value="Bacteria"/>
</dbReference>
<dbReference type="HOGENOM" id="CLU_038422_0_0_11"/>
<dbReference type="Proteomes" id="UP000001988">
    <property type="component" value="Chromosome"/>
</dbReference>
<dbReference type="GO" id="GO:0005737">
    <property type="term" value="C:cytoplasm"/>
    <property type="evidence" value="ECO:0007669"/>
    <property type="project" value="UniProtKB-SubCell"/>
</dbReference>
<dbReference type="GO" id="GO:0071424">
    <property type="term" value="F:rRNA (cytosine-N4-)-methyltransferase activity"/>
    <property type="evidence" value="ECO:0007669"/>
    <property type="project" value="UniProtKB-UniRule"/>
</dbReference>
<dbReference type="GO" id="GO:0070475">
    <property type="term" value="P:rRNA base methylation"/>
    <property type="evidence" value="ECO:0007669"/>
    <property type="project" value="UniProtKB-UniRule"/>
</dbReference>
<dbReference type="FunFam" id="1.10.150.170:FF:000001">
    <property type="entry name" value="Ribosomal RNA small subunit methyltransferase H"/>
    <property type="match status" value="1"/>
</dbReference>
<dbReference type="Gene3D" id="1.10.150.170">
    <property type="entry name" value="Putative methyltransferase TM0872, insert domain"/>
    <property type="match status" value="1"/>
</dbReference>
<dbReference type="Gene3D" id="3.40.50.150">
    <property type="entry name" value="Vaccinia Virus protein VP39"/>
    <property type="match status" value="1"/>
</dbReference>
<dbReference type="HAMAP" id="MF_01007">
    <property type="entry name" value="16SrRNA_methyltr_H"/>
    <property type="match status" value="1"/>
</dbReference>
<dbReference type="InterPro" id="IPR002903">
    <property type="entry name" value="RsmH"/>
</dbReference>
<dbReference type="InterPro" id="IPR023397">
    <property type="entry name" value="SAM-dep_MeTrfase_MraW_recog"/>
</dbReference>
<dbReference type="InterPro" id="IPR029063">
    <property type="entry name" value="SAM-dependent_MTases_sf"/>
</dbReference>
<dbReference type="NCBIfam" id="TIGR00006">
    <property type="entry name" value="16S rRNA (cytosine(1402)-N(4))-methyltransferase RsmH"/>
    <property type="match status" value="1"/>
</dbReference>
<dbReference type="PANTHER" id="PTHR11265:SF0">
    <property type="entry name" value="12S RRNA N4-METHYLCYTIDINE METHYLTRANSFERASE"/>
    <property type="match status" value="1"/>
</dbReference>
<dbReference type="PANTHER" id="PTHR11265">
    <property type="entry name" value="S-ADENOSYL-METHYLTRANSFERASE MRAW"/>
    <property type="match status" value="1"/>
</dbReference>
<dbReference type="Pfam" id="PF01795">
    <property type="entry name" value="Methyltransf_5"/>
    <property type="match status" value="1"/>
</dbReference>
<dbReference type="SUPFAM" id="SSF81799">
    <property type="entry name" value="Putative methyltransferase TM0872, insert domain"/>
    <property type="match status" value="1"/>
</dbReference>
<dbReference type="SUPFAM" id="SSF53335">
    <property type="entry name" value="S-adenosyl-L-methionine-dependent methyltransferases"/>
    <property type="match status" value="1"/>
</dbReference>
<sequence length="396" mass="42529">MQTRAPWSLPEATLAYFPNARFVSSDRDLGAGAAPGIAASRSTACQTWGGITVADPGSGPTGFGHVPVLAQRCFELLTPALTRYYPDGSQAVLLDATIGAGGHAERFLEGLPGLRLIGLDRDPTALDVARSRLVRFADRLTLVHTRYDCLGAALAESGYAAVGSVDGILFDLGVSSMQLDRAERGFAYATDAPLDMRMDPTTPLTAADIVNTYDEAALADILRRYGEERFARRIAAGIVRRRAKTPFTSTAELVALLYQAIPAPARRVGGHPAKRTFQALRIAVNDELESLRTAVPAALDALAIGGRIAVLAYQSLEDRIVKRVFAEAVASATPAGLPVELPGHEPRFRSLTHGAERASVAEIERNPRSTPVRLRALQRVEHRAQSQQWATEKGDS</sequence>
<accession>A5U4J2</accession>
<name>RSMH_MYCTA</name>
<comment type="function">
    <text evidence="1">Specifically methylates the N4 position of cytidine in position 1402 (C1402) of 16S rRNA.</text>
</comment>
<comment type="catalytic activity">
    <reaction evidence="1">
        <text>cytidine(1402) in 16S rRNA + S-adenosyl-L-methionine = N(4)-methylcytidine(1402) in 16S rRNA + S-adenosyl-L-homocysteine + H(+)</text>
        <dbReference type="Rhea" id="RHEA:42928"/>
        <dbReference type="Rhea" id="RHEA-COMP:10286"/>
        <dbReference type="Rhea" id="RHEA-COMP:10287"/>
        <dbReference type="ChEBI" id="CHEBI:15378"/>
        <dbReference type="ChEBI" id="CHEBI:57856"/>
        <dbReference type="ChEBI" id="CHEBI:59789"/>
        <dbReference type="ChEBI" id="CHEBI:74506"/>
        <dbReference type="ChEBI" id="CHEBI:82748"/>
        <dbReference type="EC" id="2.1.1.199"/>
    </reaction>
</comment>
<comment type="subcellular location">
    <subcellularLocation>
        <location evidence="1">Cytoplasm</location>
    </subcellularLocation>
</comment>
<comment type="similarity">
    <text evidence="1">Belongs to the methyltransferase superfamily. RsmH family.</text>
</comment>
<reference key="1">
    <citation type="journal article" date="2008" name="PLoS ONE">
        <title>Genetic basis of virulence attenuation revealed by comparative genomic analysis of Mycobacterium tuberculosis strain H37Ra versus H37Rv.</title>
        <authorList>
            <person name="Zheng H."/>
            <person name="Lu L."/>
            <person name="Wang B."/>
            <person name="Pu S."/>
            <person name="Zhang X."/>
            <person name="Zhu G."/>
            <person name="Shi W."/>
            <person name="Zhang L."/>
            <person name="Wang H."/>
            <person name="Wang S."/>
            <person name="Zhao G."/>
            <person name="Zhang Y."/>
        </authorList>
    </citation>
    <scope>NUCLEOTIDE SEQUENCE [LARGE SCALE GENOMIC DNA]</scope>
    <source>
        <strain>ATCC 25177 / H37Ra</strain>
    </source>
</reference>